<evidence type="ECO:0000250" key="1"/>
<evidence type="ECO:0000255" key="2"/>
<evidence type="ECO:0000269" key="3">
    <source>
    </source>
</evidence>
<evidence type="ECO:0000305" key="4"/>
<proteinExistence type="evidence at protein level"/>
<dbReference type="EC" id="3.1.6.1"/>
<dbReference type="EMBL" id="X77214">
    <property type="protein sequence ID" value="CAA54426.1"/>
    <property type="molecule type" value="mRNA"/>
</dbReference>
<dbReference type="PIR" id="S43229">
    <property type="entry name" value="S43229"/>
</dbReference>
<dbReference type="SMR" id="Q10723"/>
<dbReference type="BioCyc" id="MetaCyc:MONOMER-16826"/>
<dbReference type="GO" id="GO:0004065">
    <property type="term" value="F:arylsulfatase activity"/>
    <property type="evidence" value="ECO:0007669"/>
    <property type="project" value="UniProtKB-EC"/>
</dbReference>
<dbReference type="GO" id="GO:0005539">
    <property type="term" value="F:glycosaminoglycan binding"/>
    <property type="evidence" value="ECO:0007669"/>
    <property type="project" value="TreeGrafter"/>
</dbReference>
<dbReference type="GO" id="GO:0046872">
    <property type="term" value="F:metal ion binding"/>
    <property type="evidence" value="ECO:0007669"/>
    <property type="project" value="UniProtKB-KW"/>
</dbReference>
<dbReference type="GO" id="GO:0008449">
    <property type="term" value="F:N-acetylglucosamine-6-sulfatase activity"/>
    <property type="evidence" value="ECO:0007669"/>
    <property type="project" value="TreeGrafter"/>
</dbReference>
<dbReference type="GO" id="GO:0018958">
    <property type="term" value="P:phenol-containing compound metabolic process"/>
    <property type="evidence" value="ECO:0007669"/>
    <property type="project" value="InterPro"/>
</dbReference>
<dbReference type="CDD" id="cd16147">
    <property type="entry name" value="G6S"/>
    <property type="match status" value="1"/>
</dbReference>
<dbReference type="FunFam" id="3.40.720.10:FF:000098">
    <property type="entry name" value="Arylsulfatase"/>
    <property type="match status" value="1"/>
</dbReference>
<dbReference type="Gene3D" id="3.40.720.10">
    <property type="entry name" value="Alkaline Phosphatase, subunit A"/>
    <property type="match status" value="1"/>
</dbReference>
<dbReference type="InterPro" id="IPR017850">
    <property type="entry name" value="Alkaline_phosphatase_core_sf"/>
</dbReference>
<dbReference type="InterPro" id="IPR012083">
    <property type="entry name" value="Arylsulfatase"/>
</dbReference>
<dbReference type="InterPro" id="IPR024607">
    <property type="entry name" value="Sulfatase_CS"/>
</dbReference>
<dbReference type="InterPro" id="IPR000917">
    <property type="entry name" value="Sulfatase_N"/>
</dbReference>
<dbReference type="PANTHER" id="PTHR43108">
    <property type="entry name" value="N-ACETYLGLUCOSAMINE-6-SULFATASE FAMILY MEMBER"/>
    <property type="match status" value="1"/>
</dbReference>
<dbReference type="PANTHER" id="PTHR43108:SF8">
    <property type="entry name" value="SD21168P"/>
    <property type="match status" value="1"/>
</dbReference>
<dbReference type="Pfam" id="PF00884">
    <property type="entry name" value="Sulfatase"/>
    <property type="match status" value="1"/>
</dbReference>
<dbReference type="PIRSF" id="PIRSF000972">
    <property type="entry name" value="Arylsulf_plant"/>
    <property type="match status" value="1"/>
</dbReference>
<dbReference type="SUPFAM" id="SSF53649">
    <property type="entry name" value="Alkaline phosphatase-like"/>
    <property type="match status" value="1"/>
</dbReference>
<dbReference type="PROSITE" id="PS00523">
    <property type="entry name" value="SULFATASE_1"/>
    <property type="match status" value="1"/>
</dbReference>
<dbReference type="PROSITE" id="PS00149">
    <property type="entry name" value="SULFATASE_2"/>
    <property type="match status" value="1"/>
</dbReference>
<sequence length="649" mass="72287">MLQRLVVALCLLGFAALTAAAAHQRPNFVVIFTDDQDGIQNSTHPRYQPKLHEHIRYPGIELKNYFVTTPVCCPSRTNLWRGQFSHNTNFTDVLGPHGGYAKWKSLGIDKSYLPVWLQNLGYNTYYVGKFLVDYSVSNYQNVPAGWTDIDALVTPYTFDYNNPGFSRNGATPNIYPGFYSTDVIADKAVAQIKTAVAAGKPFYAQISPIAPHTSTQIYFDPVANATKTFFYPPIPAPRHWELFSDATLPEGTSHKNLYEADVSDKPAWIRALPLAQQNNRTYLEEVYRLRLRSLASVDELIDRVVATLQEAGVLDNTYLIYSADNGYHVGTHRFGAGKVTAYDEDLRVPFLIRGPGIRASHSDKPANSKVGLHVDFAPTILTLAGAGDQVGDKALDGTPLGLYANDDGNLLADYPRPANHRNQFQGEFWGGWSDEVLHHIPRYTNNSWKAVRVYDEDNQQAWKLIVSCTNERELYDLKTDPGELCNIYNKTRAAVRTRLEALLAVLVVCKGESCTNPWKILHPEGSVNSWNQSLDRKYDKYYANVAPFQYRTCLPYQDHNNEVSAFRSTVAAAAAAAAAAAAQQPGRRRMYTWTSAGRQLSATASAIATSPQPRSEPFVAEVERHSVPVPAEVLQSDVAKWFDNPLALA</sequence>
<protein>
    <recommendedName>
        <fullName>Arylsulfatase</fullName>
        <shortName>AS</shortName>
        <ecNumber>3.1.6.1</ecNumber>
    </recommendedName>
    <alternativeName>
        <fullName>Aryl-sulfate sulphohydrolase</fullName>
    </alternativeName>
</protein>
<name>ARS_VOLCA</name>
<comment type="function">
    <text>Is commonly produced by soil microorganisms and plays an important role in the mineralization of sulfates.</text>
</comment>
<comment type="catalytic activity">
    <reaction>
        <text>an aryl sulfate + H2O = a phenol + sulfate + H(+)</text>
        <dbReference type="Rhea" id="RHEA:17261"/>
        <dbReference type="ChEBI" id="CHEBI:15377"/>
        <dbReference type="ChEBI" id="CHEBI:15378"/>
        <dbReference type="ChEBI" id="CHEBI:16189"/>
        <dbReference type="ChEBI" id="CHEBI:33853"/>
        <dbReference type="ChEBI" id="CHEBI:140317"/>
        <dbReference type="EC" id="3.1.6.1"/>
    </reaction>
</comment>
<comment type="cofactor">
    <cofactor evidence="1">
        <name>Ca(2+)</name>
        <dbReference type="ChEBI" id="CHEBI:29108"/>
    </cofactor>
    <text evidence="1">Binds 1 Ca(2+) ion per subunit.</text>
</comment>
<comment type="activity regulation">
    <text>Inhibited by Na(3)BO(3) and KCN. No inhibition by sodium dodecyl sulfate, even at high concentration.</text>
</comment>
<comment type="biophysicochemical properties">
    <phDependence>
        <text>Optimum pH is 8.0.</text>
    </phDependence>
    <temperatureDependence>
        <text>Optimum temperature is 60 degrees Celsius. Thermostable.</text>
    </temperatureDependence>
</comment>
<comment type="subcellular location">
    <subcellularLocation>
        <location>Periplasm</location>
    </subcellularLocation>
</comment>
<comment type="induction">
    <text>By sulfur deprivation.</text>
</comment>
<comment type="PTM">
    <text evidence="1">The conversion to 3-oxoalanine (also known as C-formylglycine, FGly), of a serine or cysteine residue in prokaryotes and of a cysteine residue in eukaryotes, is critical for catalytic activity.</text>
</comment>
<comment type="similarity">
    <text evidence="4">Belongs to the sulfatase family.</text>
</comment>
<organism>
    <name type="scientific">Volvox carteri</name>
    <name type="common">Green alga</name>
    <dbReference type="NCBI Taxonomy" id="3067"/>
    <lineage>
        <taxon>Eukaryota</taxon>
        <taxon>Viridiplantae</taxon>
        <taxon>Chlorophyta</taxon>
        <taxon>core chlorophytes</taxon>
        <taxon>Chlorophyceae</taxon>
        <taxon>CS clade</taxon>
        <taxon>Chlamydomonadales</taxon>
        <taxon>Volvocaceae</taxon>
        <taxon>Volvox</taxon>
    </lineage>
</organism>
<accession>Q10723</accession>
<reference key="1">
    <citation type="journal article" date="1994" name="Eur. J. Biochem.">
        <title>An inducible arylsulfatase of Volvox carteri with properties suitable for a reporter-gene system. Purification, characterization and molecular cloning.</title>
        <authorList>
            <person name="Hallmann A."/>
            <person name="Sumper M."/>
        </authorList>
    </citation>
    <scope>NUCLEOTIDE SEQUENCE [MRNA]</scope>
    <scope>PARTIAL PROTEIN SEQUENCE</scope>
    <scope>CHARACTERIZATION</scope>
    <source>
        <strain>f. Nagariensis / HK10</strain>
    </source>
</reference>
<reference key="2">
    <citation type="journal article" date="1996" name="Eur. J. Biochem.">
        <title>The evolutionary conservation of a novel protein modification, the conversion of cysteine to serinesemialdehyde in arylsulfatase from Volvox carteri.</title>
        <authorList>
            <person name="Selmer T."/>
            <person name="Hallmann A."/>
            <person name="Schmidt B."/>
            <person name="Sumper M."/>
            <person name="von Figura K."/>
        </authorList>
    </citation>
    <scope>PROTEIN SEQUENCE OF 64-76</scope>
    <scope>ACTIVE SITE</scope>
    <scope>OXOALANINE AT CYS-72</scope>
</reference>
<feature type="signal peptide">
    <location>
        <begin position="1"/>
        <end position="22"/>
    </location>
</feature>
<feature type="chain" id="PRO_0000033445" description="Arylsulfatase">
    <location>
        <begin position="23"/>
        <end position="649"/>
    </location>
</feature>
<feature type="active site" description="Nucleophile" evidence="3">
    <location>
        <position position="72"/>
    </location>
</feature>
<feature type="binding site" evidence="1">
    <location>
        <position position="34"/>
    </location>
    <ligand>
        <name>Ca(2+)</name>
        <dbReference type="ChEBI" id="CHEBI:29108"/>
    </ligand>
</feature>
<feature type="binding site" evidence="1">
    <location>
        <position position="35"/>
    </location>
    <ligand>
        <name>Ca(2+)</name>
        <dbReference type="ChEBI" id="CHEBI:29108"/>
    </ligand>
</feature>
<feature type="binding site" description="via 3-oxoalanine" evidence="1">
    <location>
        <position position="72"/>
    </location>
    <ligand>
        <name>Ca(2+)</name>
        <dbReference type="ChEBI" id="CHEBI:29108"/>
    </ligand>
</feature>
<feature type="binding site" evidence="1">
    <location>
        <position position="324"/>
    </location>
    <ligand>
        <name>Ca(2+)</name>
        <dbReference type="ChEBI" id="CHEBI:29108"/>
    </ligand>
</feature>
<feature type="binding site" evidence="1">
    <location>
        <position position="325"/>
    </location>
    <ligand>
        <name>Ca(2+)</name>
        <dbReference type="ChEBI" id="CHEBI:29108"/>
    </ligand>
</feature>
<feature type="modified residue" description="3-oxoalanine (Cys)" evidence="3">
    <location>
        <position position="72"/>
    </location>
</feature>
<feature type="glycosylation site" description="N-linked (GlcNAc...) asparagine" evidence="2">
    <location>
        <position position="41"/>
    </location>
</feature>
<feature type="glycosylation site" description="N-linked (GlcNAc...) asparagine">
    <location>
        <position position="89"/>
    </location>
</feature>
<feature type="glycosylation site" description="N-linked (GlcNAc...) asparagine" evidence="2">
    <location>
        <position position="224"/>
    </location>
</feature>
<feature type="glycosylation site" description="N-linked (GlcNAc...) asparagine" evidence="2">
    <location>
        <position position="279"/>
    </location>
</feature>
<feature type="glycosylation site" description="N-linked (GlcNAc...) asparagine" evidence="2">
    <location>
        <position position="445"/>
    </location>
</feature>
<feature type="glycosylation site" description="N-linked (GlcNAc...) asparagine" evidence="2">
    <location>
        <position position="489"/>
    </location>
</feature>
<feature type="glycosylation site" description="N-linked (GlcNAc...) asparagine" evidence="2">
    <location>
        <position position="531"/>
    </location>
</feature>
<keyword id="KW-0106">Calcium</keyword>
<keyword id="KW-0903">Direct protein sequencing</keyword>
<keyword id="KW-0325">Glycoprotein</keyword>
<keyword id="KW-0378">Hydrolase</keyword>
<keyword id="KW-0479">Metal-binding</keyword>
<keyword id="KW-0574">Periplasm</keyword>
<keyword id="KW-0732">Signal</keyword>
<keyword id="KW-0346">Stress response</keyword>